<evidence type="ECO:0000250" key="1"/>
<evidence type="ECO:0000250" key="2">
    <source>
        <dbReference type="UniProtKB" id="Q43127"/>
    </source>
</evidence>
<evidence type="ECO:0000250" key="3">
    <source>
        <dbReference type="UniProtKB" id="Q8LCE1"/>
    </source>
</evidence>
<evidence type="ECO:0000255" key="4">
    <source>
        <dbReference type="PROSITE-ProRule" id="PRU01330"/>
    </source>
</evidence>
<evidence type="ECO:0000255" key="5">
    <source>
        <dbReference type="PROSITE-ProRule" id="PRU01331"/>
    </source>
</evidence>
<evidence type="ECO:0000269" key="6">
    <source>
    </source>
</evidence>
<evidence type="ECO:0000269" key="7">
    <source>
    </source>
</evidence>
<evidence type="ECO:0000269" key="8">
    <source>
    </source>
</evidence>
<evidence type="ECO:0000305" key="9"/>
<evidence type="ECO:0007744" key="10">
    <source>
    </source>
</evidence>
<protein>
    <recommendedName>
        <fullName>Glutamine synthetase cytosolic isozyme 1-3</fullName>
        <shortName>GS1</shortName>
        <ecNumber evidence="7">6.3.1.2</ecNumber>
    </recommendedName>
    <alternativeName>
        <fullName>Glutamate--ammonia ligase GLN1;3</fullName>
        <shortName>GLN1;3</shortName>
    </alternativeName>
</protein>
<reference key="1">
    <citation type="journal article" date="2000" name="DNA Res.">
        <title>Structural analysis of Arabidopsis thaliana chromosome 3. I. Sequence features of the regions of 4,504,864 bp covered by sixty P1 and TAC clones.</title>
        <authorList>
            <person name="Sato S."/>
            <person name="Nakamura Y."/>
            <person name="Kaneko T."/>
            <person name="Katoh T."/>
            <person name="Asamizu E."/>
            <person name="Tabata S."/>
        </authorList>
    </citation>
    <scope>NUCLEOTIDE SEQUENCE [LARGE SCALE GENOMIC DNA]</scope>
    <source>
        <strain>cv. Columbia</strain>
    </source>
</reference>
<reference key="2">
    <citation type="journal article" date="2017" name="Plant J.">
        <title>Araport11: a complete reannotation of the Arabidopsis thaliana reference genome.</title>
        <authorList>
            <person name="Cheng C.Y."/>
            <person name="Krishnakumar V."/>
            <person name="Chan A.P."/>
            <person name="Thibaud-Nissen F."/>
            <person name="Schobel S."/>
            <person name="Town C.D."/>
        </authorList>
    </citation>
    <scope>GENOME REANNOTATION</scope>
    <source>
        <strain>cv. Columbia</strain>
    </source>
</reference>
<reference key="3">
    <citation type="journal article" date="2003" name="Science">
        <title>Empirical analysis of transcriptional activity in the Arabidopsis genome.</title>
        <authorList>
            <person name="Yamada K."/>
            <person name="Lim J."/>
            <person name="Dale J.M."/>
            <person name="Chen H."/>
            <person name="Shinn P."/>
            <person name="Palm C.J."/>
            <person name="Southwick A.M."/>
            <person name="Wu H.C."/>
            <person name="Kim C.J."/>
            <person name="Nguyen M."/>
            <person name="Pham P.K."/>
            <person name="Cheuk R.F."/>
            <person name="Karlin-Newmann G."/>
            <person name="Liu S.X."/>
            <person name="Lam B."/>
            <person name="Sakano H."/>
            <person name="Wu T."/>
            <person name="Yu G."/>
            <person name="Miranda M."/>
            <person name="Quach H.L."/>
            <person name="Tripp M."/>
            <person name="Chang C.H."/>
            <person name="Lee J.M."/>
            <person name="Toriumi M.J."/>
            <person name="Chan M.M."/>
            <person name="Tang C.C."/>
            <person name="Onodera C.S."/>
            <person name="Deng J.M."/>
            <person name="Akiyama K."/>
            <person name="Ansari Y."/>
            <person name="Arakawa T."/>
            <person name="Banh J."/>
            <person name="Banno F."/>
            <person name="Bowser L."/>
            <person name="Brooks S.Y."/>
            <person name="Carninci P."/>
            <person name="Chao Q."/>
            <person name="Choy N."/>
            <person name="Enju A."/>
            <person name="Goldsmith A.D."/>
            <person name="Gurjal M."/>
            <person name="Hansen N.F."/>
            <person name="Hayashizaki Y."/>
            <person name="Johnson-Hopson C."/>
            <person name="Hsuan V.W."/>
            <person name="Iida K."/>
            <person name="Karnes M."/>
            <person name="Khan S."/>
            <person name="Koesema E."/>
            <person name="Ishida J."/>
            <person name="Jiang P.X."/>
            <person name="Jones T."/>
            <person name="Kawai J."/>
            <person name="Kamiya A."/>
            <person name="Meyers C."/>
            <person name="Nakajima M."/>
            <person name="Narusaka M."/>
            <person name="Seki M."/>
            <person name="Sakurai T."/>
            <person name="Satou M."/>
            <person name="Tamse R."/>
            <person name="Vaysberg M."/>
            <person name="Wallender E.K."/>
            <person name="Wong C."/>
            <person name="Yamamura Y."/>
            <person name="Yuan S."/>
            <person name="Shinozaki K."/>
            <person name="Davis R.W."/>
            <person name="Theologis A."/>
            <person name="Ecker J.R."/>
        </authorList>
    </citation>
    <scope>NUCLEOTIDE SEQUENCE [LARGE SCALE MRNA]</scope>
    <source>
        <strain>cv. Columbia</strain>
    </source>
</reference>
<reference key="4">
    <citation type="submission" date="2002-03" db="EMBL/GenBank/DDBJ databases">
        <title>Full-length cDNA from Arabidopsis thaliana.</title>
        <authorList>
            <person name="Brover V.V."/>
            <person name="Troukhan M.E."/>
            <person name="Alexandrov N.A."/>
            <person name="Lu Y.-P."/>
            <person name="Flavell R.B."/>
            <person name="Feldmann K.A."/>
        </authorList>
    </citation>
    <scope>NUCLEOTIDE SEQUENCE [LARGE SCALE MRNA]</scope>
</reference>
<reference key="5">
    <citation type="submission" date="2004-12" db="EMBL/GenBank/DDBJ databases">
        <title>Arabidopsis ORF clones.</title>
        <authorList>
            <person name="Kim C.J."/>
            <person name="Chen H."/>
            <person name="Cheuk R.F."/>
            <person name="Shinn P."/>
            <person name="Ecker J.R."/>
        </authorList>
    </citation>
    <scope>NUCLEOTIDE SEQUENCE [LARGE SCALE MRNA]</scope>
    <source>
        <strain>cv. Columbia</strain>
    </source>
</reference>
<reference key="6">
    <citation type="journal article" date="1999" name="Plant Physiol.">
        <title>Carbon and amino acids reciprocally modulate the expression of glutamine synthetase in Arabidopsis.</title>
        <authorList>
            <person name="Oliveira I.C."/>
            <person name="Coruzzi G.M."/>
        </authorList>
    </citation>
    <scope>INDUCTION</scope>
</reference>
<reference key="7">
    <citation type="journal article" date="2004" name="J. Biol. Chem.">
        <title>Kinetic properties and ammonium-dependent regulation of cytosolic isoenzymes of glutamine synthetase in Arabidopsis.</title>
        <authorList>
            <person name="Ishiyama K."/>
            <person name="Inoue E."/>
            <person name="Watanabe-Takahashi A."/>
            <person name="Obara M."/>
            <person name="Yamaya T."/>
            <person name="Takahashi H."/>
        </authorList>
    </citation>
    <scope>CATALYTIC ACTIVITY</scope>
    <scope>FUNCTION</scope>
    <scope>BIOPHYSICOCHEMICAL PROPERTIES</scope>
    <scope>TISSUE SPECIFICITY</scope>
    <scope>INDUCTION</scope>
</reference>
<reference key="8">
    <citation type="journal article" date="2006" name="Plant Cell Physiol.">
        <title>Gln49 and Ser174 residues play critical roles in determining the catalytic efficiencies of plant glutamine synthetase.</title>
        <authorList>
            <person name="Ishiyama K."/>
            <person name="Inoue E."/>
            <person name="Yamaya T."/>
            <person name="Takahashi H."/>
        </authorList>
    </citation>
    <scope>MUTAGENESIS OF LYS-49 AND ALA-174</scope>
</reference>
<reference key="9">
    <citation type="journal article" date="2012" name="Mol. Cell. Proteomics">
        <title>Comparative large-scale characterisation of plant vs. mammal proteins reveals similar and idiosyncratic N-alpha acetylation features.</title>
        <authorList>
            <person name="Bienvenut W.V."/>
            <person name="Sumpton D."/>
            <person name="Martinez A."/>
            <person name="Lilla S."/>
            <person name="Espagne C."/>
            <person name="Meinnel T."/>
            <person name="Giglione C."/>
        </authorList>
    </citation>
    <scope>ACETYLATION [LARGE SCALE ANALYSIS] AT SER-2</scope>
    <scope>CLEAVAGE OF INITIATOR METHIONINE [LARGE SCALE ANALYSIS]</scope>
    <scope>IDENTIFICATION BY MASS SPECTROMETRY [LARGE SCALE ANALYSIS]</scope>
</reference>
<proteinExistence type="evidence at protein level"/>
<sequence>MSLLSDLVNLNLTDATGKIIAEYIWIGGSGMDIRSKARTLPGPVTDPSKLPKWNYDGSSTGQAAGEDSEVILYPQAIFKDPFRKGNNILVMCDAYTPAGDPIPTNKRHNAAKIFSHPDVAKEEPWYGIEQEYTLMQKDVNWPIGWPVGGYPGPQGPYYCGVGADKAIGRDIVDAHYKACLYAGIGISGINGEVMPGQWEFQVGPVEGISSGDQVWVARYLLERITEISGVIVSFDPKPVPGDWNGAGAHCNYSTKTMRNDGGLEVIKKAIGKLQLKHKEHIAAYGEGNERRLTGKHETADINTFSWGVANRGASVRVGRDTEKEGKGYFEDRRPASNMDPYVVTSMIAETTILG</sequence>
<gene>
    <name type="primary">GLN1-3</name>
    <name type="ordered locus">At3g17820</name>
    <name type="ORF">MEB5.4</name>
</gene>
<name>GLN13_ARATH</name>
<feature type="initiator methionine" description="Removed" evidence="10">
    <location>
        <position position="1"/>
    </location>
</feature>
<feature type="chain" id="PRO_0000153168" description="Glutamine synthetase cytosolic isozyme 1-3">
    <location>
        <begin position="2"/>
        <end position="354"/>
    </location>
</feature>
<feature type="domain" description="GS beta-grasp" evidence="4">
    <location>
        <begin position="19"/>
        <end position="99"/>
    </location>
</feature>
<feature type="domain" description="GS catalytic" evidence="5">
    <location>
        <begin position="106"/>
        <end position="354"/>
    </location>
</feature>
<feature type="modified residue" description="N-acetylserine" evidence="10">
    <location>
        <position position="2"/>
    </location>
</feature>
<feature type="modified residue" description="Phosphoserine" evidence="3">
    <location>
        <position position="2"/>
    </location>
</feature>
<feature type="modified residue" description="Phosphoserine" evidence="2">
    <location>
        <position position="48"/>
    </location>
</feature>
<feature type="mutagenesis site" description="3-fold increase in affinity for ammonium and catalytic efficiency." evidence="8">
    <original>K</original>
    <variation>Q</variation>
    <location>
        <position position="49"/>
    </location>
</feature>
<feature type="mutagenesis site" description="4-fold increase in affinity for ammonium and catalytic efficiency." evidence="8">
    <original>A</original>
    <variation>S</variation>
    <location>
        <position position="174"/>
    </location>
</feature>
<feature type="sequence conflict" description="In Ref. 3; AAO42253." evidence="9" ref="3">
    <original>G</original>
    <variation>D</variation>
    <location>
        <position position="85"/>
    </location>
</feature>
<accession>Q9LVI8</accession>
<accession>Q5PNX0</accession>
<accession>Q84W44</accession>
<keyword id="KW-0007">Acetylation</keyword>
<keyword id="KW-0067">ATP-binding</keyword>
<keyword id="KW-0963">Cytoplasm</keyword>
<keyword id="KW-0436">Ligase</keyword>
<keyword id="KW-0547">Nucleotide-binding</keyword>
<keyword id="KW-0597">Phosphoprotein</keyword>
<keyword id="KW-1185">Reference proteome</keyword>
<comment type="function">
    <text evidence="7">Low-affinity glutamine synthetase (PubMed:14757761). May contribute to the homeostatic control of glutamine synthesis in roots.</text>
</comment>
<comment type="catalytic activity">
    <reaction evidence="7">
        <text>L-glutamate + NH4(+) + ATP = L-glutamine + ADP + phosphate + H(+)</text>
        <dbReference type="Rhea" id="RHEA:16169"/>
        <dbReference type="ChEBI" id="CHEBI:15378"/>
        <dbReference type="ChEBI" id="CHEBI:28938"/>
        <dbReference type="ChEBI" id="CHEBI:29985"/>
        <dbReference type="ChEBI" id="CHEBI:30616"/>
        <dbReference type="ChEBI" id="CHEBI:43474"/>
        <dbReference type="ChEBI" id="CHEBI:58359"/>
        <dbReference type="ChEBI" id="CHEBI:456216"/>
        <dbReference type="EC" id="6.3.1.2"/>
    </reaction>
</comment>
<comment type="biophysicochemical properties">
    <kinetics>
        <KM evidence="7">3.9 mM for glutamate</KM>
        <KM evidence="7">1210 uM for ammonium</KM>
        <KM evidence="7">850 uM for ATP</KM>
        <Vmax evidence="7">162.0 nmol/sec/mg enzyme with glutamate as substrate</Vmax>
        <Vmax evidence="7">93.9 nmol/sec/mg enzyme with ammonium as substrate</Vmax>
        <Vmax evidence="7">100.0 nmol/sec/mg enzyme with ATP as substrate</Vmax>
        <text evidence="7">Measured at pH 7.8 and 30 degrees Celsius for all experiments.</text>
    </kinetics>
</comment>
<comment type="subunit">
    <text evidence="1">Homooctamer.</text>
</comment>
<comment type="subcellular location">
    <subcellularLocation>
        <location>Cytoplasm</location>
    </subcellularLocation>
</comment>
<comment type="tissue specificity">
    <text evidence="7">Expressed in the pericycle in the region of mature root.</text>
</comment>
<comment type="induction">
    <text evidence="6 7">By sucrose, glucose and fructose. Down-regulated by ammonium supply.</text>
</comment>
<comment type="similarity">
    <text evidence="9">Belongs to the glutamine synthetase family.</text>
</comment>
<organism>
    <name type="scientific">Arabidopsis thaliana</name>
    <name type="common">Mouse-ear cress</name>
    <dbReference type="NCBI Taxonomy" id="3702"/>
    <lineage>
        <taxon>Eukaryota</taxon>
        <taxon>Viridiplantae</taxon>
        <taxon>Streptophyta</taxon>
        <taxon>Embryophyta</taxon>
        <taxon>Tracheophyta</taxon>
        <taxon>Spermatophyta</taxon>
        <taxon>Magnoliopsida</taxon>
        <taxon>eudicotyledons</taxon>
        <taxon>Gunneridae</taxon>
        <taxon>Pentapetalae</taxon>
        <taxon>rosids</taxon>
        <taxon>malvids</taxon>
        <taxon>Brassicales</taxon>
        <taxon>Brassicaceae</taxon>
        <taxon>Camelineae</taxon>
        <taxon>Arabidopsis</taxon>
    </lineage>
</organism>
<dbReference type="EC" id="6.3.1.2" evidence="7"/>
<dbReference type="EMBL" id="AB019230">
    <property type="protein sequence ID" value="BAB02705.1"/>
    <property type="molecule type" value="Genomic_DNA"/>
</dbReference>
<dbReference type="EMBL" id="CP002686">
    <property type="protein sequence ID" value="AEE76011.1"/>
    <property type="molecule type" value="Genomic_DNA"/>
</dbReference>
<dbReference type="EMBL" id="BT004249">
    <property type="protein sequence ID" value="AAO42253.1"/>
    <property type="molecule type" value="mRNA"/>
</dbReference>
<dbReference type="EMBL" id="AY088312">
    <property type="protein sequence ID" value="AAM65851.1"/>
    <property type="molecule type" value="mRNA"/>
</dbReference>
<dbReference type="EMBL" id="BT020327">
    <property type="protein sequence ID" value="AAV85682.1"/>
    <property type="molecule type" value="mRNA"/>
</dbReference>
<dbReference type="EMBL" id="BT020432">
    <property type="protein sequence ID" value="AAW28559.1"/>
    <property type="molecule type" value="mRNA"/>
</dbReference>
<dbReference type="SMR" id="Q9LVI8"/>
<dbReference type="BioGRID" id="6383">
    <property type="interactions" value="2"/>
</dbReference>
<dbReference type="FunCoup" id="Q9LVI8">
    <property type="interactions" value="2570"/>
</dbReference>
<dbReference type="STRING" id="3702.Q9LVI8"/>
<dbReference type="iPTMnet" id="Q9LVI8"/>
<dbReference type="PaxDb" id="3702-AT3G17820.1"/>
<dbReference type="ProteomicsDB" id="248583"/>
<dbReference type="DNASU" id="821050"/>
<dbReference type="EnsemblPlants" id="AT3G17820.1">
    <property type="protein sequence ID" value="AT3G17820.1"/>
    <property type="gene ID" value="AT3G17820"/>
</dbReference>
<dbReference type="Gramene" id="AT3G17820.1">
    <property type="protein sequence ID" value="AT3G17820.1"/>
    <property type="gene ID" value="AT3G17820"/>
</dbReference>
<dbReference type="KEGG" id="ath:AT3G17820"/>
<dbReference type="Araport" id="AT3G17820"/>
<dbReference type="TAIR" id="AT3G17820">
    <property type="gene designation" value="GLN1.3"/>
</dbReference>
<dbReference type="eggNOG" id="KOG0683">
    <property type="taxonomic scope" value="Eukaryota"/>
</dbReference>
<dbReference type="HOGENOM" id="CLU_036762_0_1_1"/>
<dbReference type="InParanoid" id="Q9LVI8"/>
<dbReference type="OMA" id="MQKDVNW"/>
<dbReference type="OrthoDB" id="1936100at2759"/>
<dbReference type="PhylomeDB" id="Q9LVI8"/>
<dbReference type="BRENDA" id="6.3.1.2">
    <property type="organism ID" value="399"/>
</dbReference>
<dbReference type="SABIO-RK" id="Q9LVI8"/>
<dbReference type="CD-CODE" id="4299E36E">
    <property type="entry name" value="Nucleolus"/>
</dbReference>
<dbReference type="PRO" id="PR:Q9LVI8"/>
<dbReference type="Proteomes" id="UP000006548">
    <property type="component" value="Chromosome 3"/>
</dbReference>
<dbReference type="ExpressionAtlas" id="Q9LVI8">
    <property type="expression patterns" value="baseline and differential"/>
</dbReference>
<dbReference type="GO" id="GO:0009507">
    <property type="term" value="C:chloroplast"/>
    <property type="evidence" value="ECO:0007005"/>
    <property type="project" value="TAIR"/>
</dbReference>
<dbReference type="GO" id="GO:0005829">
    <property type="term" value="C:cytosol"/>
    <property type="evidence" value="ECO:0007005"/>
    <property type="project" value="TAIR"/>
</dbReference>
<dbReference type="GO" id="GO:0022626">
    <property type="term" value="C:cytosolic ribosome"/>
    <property type="evidence" value="ECO:0007005"/>
    <property type="project" value="TAIR"/>
</dbReference>
<dbReference type="GO" id="GO:0005886">
    <property type="term" value="C:plasma membrane"/>
    <property type="evidence" value="ECO:0007005"/>
    <property type="project" value="TAIR"/>
</dbReference>
<dbReference type="GO" id="GO:0005524">
    <property type="term" value="F:ATP binding"/>
    <property type="evidence" value="ECO:0007669"/>
    <property type="project" value="UniProtKB-KW"/>
</dbReference>
<dbReference type="GO" id="GO:0005507">
    <property type="term" value="F:copper ion binding"/>
    <property type="evidence" value="ECO:0007005"/>
    <property type="project" value="TAIR"/>
</dbReference>
<dbReference type="GO" id="GO:0004356">
    <property type="term" value="F:glutamine synthetase activity"/>
    <property type="evidence" value="ECO:0000314"/>
    <property type="project" value="TAIR"/>
</dbReference>
<dbReference type="GO" id="GO:0003735">
    <property type="term" value="F:structural constituent of ribosome"/>
    <property type="evidence" value="ECO:0000314"/>
    <property type="project" value="CAFA"/>
</dbReference>
<dbReference type="GO" id="GO:0006542">
    <property type="term" value="P:glutamine biosynthetic process"/>
    <property type="evidence" value="ECO:0007669"/>
    <property type="project" value="InterPro"/>
</dbReference>
<dbReference type="GO" id="GO:0042128">
    <property type="term" value="P:nitrate assimilation"/>
    <property type="evidence" value="ECO:0000304"/>
    <property type="project" value="TAIR"/>
</dbReference>
<dbReference type="FunFam" id="3.30.590.10:FF:000004">
    <property type="entry name" value="Glutamine synthetase"/>
    <property type="match status" value="1"/>
</dbReference>
<dbReference type="FunFam" id="3.10.20.70:FF:000003">
    <property type="entry name" value="Glutamine synthetase, chloroplastic"/>
    <property type="match status" value="1"/>
</dbReference>
<dbReference type="Gene3D" id="3.10.20.70">
    <property type="entry name" value="Glutamine synthetase, N-terminal domain"/>
    <property type="match status" value="1"/>
</dbReference>
<dbReference type="Gene3D" id="3.30.590.10">
    <property type="entry name" value="Glutamine synthetase/guanido kinase, catalytic domain"/>
    <property type="match status" value="1"/>
</dbReference>
<dbReference type="InterPro" id="IPR008147">
    <property type="entry name" value="Gln_synt_N"/>
</dbReference>
<dbReference type="InterPro" id="IPR036651">
    <property type="entry name" value="Gln_synt_N_sf"/>
</dbReference>
<dbReference type="InterPro" id="IPR014746">
    <property type="entry name" value="Gln_synth/guanido_kin_cat_dom"/>
</dbReference>
<dbReference type="InterPro" id="IPR008146">
    <property type="entry name" value="Gln_synth_cat_dom"/>
</dbReference>
<dbReference type="InterPro" id="IPR027303">
    <property type="entry name" value="Gln_synth_gly_rich_site"/>
</dbReference>
<dbReference type="InterPro" id="IPR027302">
    <property type="entry name" value="Gln_synth_N_conserv_site"/>
</dbReference>
<dbReference type="InterPro" id="IPR050292">
    <property type="entry name" value="Glutamine_Synthetase"/>
</dbReference>
<dbReference type="PANTHER" id="PTHR20852">
    <property type="entry name" value="GLUTAMINE SYNTHETASE"/>
    <property type="match status" value="1"/>
</dbReference>
<dbReference type="PANTHER" id="PTHR20852:SF86">
    <property type="entry name" value="GLUTAMINE SYNTHETASE CYTOSOLIC ISOZYME 1-3"/>
    <property type="match status" value="1"/>
</dbReference>
<dbReference type="Pfam" id="PF00120">
    <property type="entry name" value="Gln-synt_C"/>
    <property type="match status" value="1"/>
</dbReference>
<dbReference type="Pfam" id="PF03951">
    <property type="entry name" value="Gln-synt_N"/>
    <property type="match status" value="1"/>
</dbReference>
<dbReference type="SMART" id="SM01230">
    <property type="entry name" value="Gln-synt_C"/>
    <property type="match status" value="1"/>
</dbReference>
<dbReference type="SUPFAM" id="SSF54368">
    <property type="entry name" value="Glutamine synthetase, N-terminal domain"/>
    <property type="match status" value="1"/>
</dbReference>
<dbReference type="SUPFAM" id="SSF55931">
    <property type="entry name" value="Glutamine synthetase/guanido kinase"/>
    <property type="match status" value="1"/>
</dbReference>
<dbReference type="PROSITE" id="PS00180">
    <property type="entry name" value="GLNA_1"/>
    <property type="match status" value="1"/>
</dbReference>
<dbReference type="PROSITE" id="PS00181">
    <property type="entry name" value="GLNA_ATP"/>
    <property type="match status" value="1"/>
</dbReference>
<dbReference type="PROSITE" id="PS51986">
    <property type="entry name" value="GS_BETA_GRASP"/>
    <property type="match status" value="1"/>
</dbReference>
<dbReference type="PROSITE" id="PS51987">
    <property type="entry name" value="GS_CATALYTIC"/>
    <property type="match status" value="1"/>
</dbReference>